<comment type="function">
    <text>PPIases accelerate the folding of proteins. It catalyzes the cis-trans isomerization of proline imidic peptide bonds in oligopeptides.</text>
</comment>
<comment type="catalytic activity">
    <reaction>
        <text>[protein]-peptidylproline (omega=180) = [protein]-peptidylproline (omega=0)</text>
        <dbReference type="Rhea" id="RHEA:16237"/>
        <dbReference type="Rhea" id="RHEA-COMP:10747"/>
        <dbReference type="Rhea" id="RHEA-COMP:10748"/>
        <dbReference type="ChEBI" id="CHEBI:83833"/>
        <dbReference type="ChEBI" id="CHEBI:83834"/>
        <dbReference type="EC" id="5.2.1.8"/>
    </reaction>
</comment>
<comment type="activity regulation">
    <text evidence="1">Binds cyclosporin A (CsA). CsA mediates some of its effects via an inhibitory action on PPIase (By similarity).</text>
</comment>
<comment type="subcellular location">
    <subcellularLocation>
        <location evidence="5">Cytoplasm</location>
    </subcellularLocation>
</comment>
<comment type="tissue specificity">
    <text evidence="3 4">Ubiquitous, with highest levels in flowers and lowest levels in roots.</text>
</comment>
<comment type="induction">
    <text evidence="4">By wounding, and slightly by light.</text>
</comment>
<comment type="similarity">
    <text evidence="5">Belongs to the cyclophilin-type PPIase family.</text>
</comment>
<gene>
    <name type="primary">CYP19-3</name>
    <name type="synonym">CYP4</name>
    <name type="synonym">ROC2</name>
    <name type="ordered locus">At3g56070</name>
    <name type="ORF">F18O21.30</name>
</gene>
<sequence>MANPKVFFDILIGKMKAGRVVMELFADVTPRTANNFRALCTGENGIGKAGKALHYKGSAFHRIIPGFMCQGGDFTRGNGTGGESIYGSKFEDENFKLKHTGPGILSMANSGPNTNGSQFFICTEKTSWLDGKHVVFGKVVDGYNVVKAMEDVGSDMGNPSERVVIEDCGELKNPSS</sequence>
<proteinExistence type="evidence at transcript level"/>
<name>CP19C_ARATH</name>
<reference key="1">
    <citation type="journal article" date="1997" name="Plant Mol. Biol.">
        <title>Characterization of the cyclophilin gene family of Arabidopsis thaliana and phylogenetic analysis of known cyclophilin proteins.</title>
        <authorList>
            <person name="Chou I.T."/>
            <person name="Gasser C.S."/>
        </authorList>
    </citation>
    <scope>NUCLEOTIDE SEQUENCE [GENOMIC DNA]</scope>
    <scope>TISSUE SPECIFICITY</scope>
    <scope>INDUCTION</scope>
    <source>
        <strain>cv. Columbia</strain>
    </source>
</reference>
<reference key="2">
    <citation type="submission" date="1995-07" db="EMBL/GenBank/DDBJ databases">
        <authorList>
            <person name="Saito T."/>
            <person name="Ashida H."/>
            <person name="Kawamukai M."/>
            <person name="Matsuda H."/>
            <person name="Nakagawa T."/>
        </authorList>
    </citation>
    <scope>NUCLEOTIDE SEQUENCE [GENOMIC DNA]</scope>
    <source>
        <strain>cv. Landsberg erecta</strain>
    </source>
</reference>
<reference key="3">
    <citation type="journal article" date="2000" name="Nature">
        <title>Sequence and analysis of chromosome 3 of the plant Arabidopsis thaliana.</title>
        <authorList>
            <person name="Salanoubat M."/>
            <person name="Lemcke K."/>
            <person name="Rieger M."/>
            <person name="Ansorge W."/>
            <person name="Unseld M."/>
            <person name="Fartmann B."/>
            <person name="Valle G."/>
            <person name="Bloecker H."/>
            <person name="Perez-Alonso M."/>
            <person name="Obermaier B."/>
            <person name="Delseny M."/>
            <person name="Boutry M."/>
            <person name="Grivell L.A."/>
            <person name="Mache R."/>
            <person name="Puigdomenech P."/>
            <person name="De Simone V."/>
            <person name="Choisne N."/>
            <person name="Artiguenave F."/>
            <person name="Robert C."/>
            <person name="Brottier P."/>
            <person name="Wincker P."/>
            <person name="Cattolico L."/>
            <person name="Weissenbach J."/>
            <person name="Saurin W."/>
            <person name="Quetier F."/>
            <person name="Schaefer M."/>
            <person name="Mueller-Auer S."/>
            <person name="Gabel C."/>
            <person name="Fuchs M."/>
            <person name="Benes V."/>
            <person name="Wurmbach E."/>
            <person name="Drzonek H."/>
            <person name="Erfle H."/>
            <person name="Jordan N."/>
            <person name="Bangert S."/>
            <person name="Wiedelmann R."/>
            <person name="Kranz H."/>
            <person name="Voss H."/>
            <person name="Holland R."/>
            <person name="Brandt P."/>
            <person name="Nyakatura G."/>
            <person name="Vezzi A."/>
            <person name="D'Angelo M."/>
            <person name="Pallavicini A."/>
            <person name="Toppo S."/>
            <person name="Simionati B."/>
            <person name="Conrad A."/>
            <person name="Hornischer K."/>
            <person name="Kauer G."/>
            <person name="Loehnert T.-H."/>
            <person name="Nordsiek G."/>
            <person name="Reichelt J."/>
            <person name="Scharfe M."/>
            <person name="Schoen O."/>
            <person name="Bargues M."/>
            <person name="Terol J."/>
            <person name="Climent J."/>
            <person name="Navarro P."/>
            <person name="Collado C."/>
            <person name="Perez-Perez A."/>
            <person name="Ottenwaelder B."/>
            <person name="Duchemin D."/>
            <person name="Cooke R."/>
            <person name="Laudie M."/>
            <person name="Berger-Llauro C."/>
            <person name="Purnelle B."/>
            <person name="Masuy D."/>
            <person name="de Haan M."/>
            <person name="Maarse A.C."/>
            <person name="Alcaraz J.-P."/>
            <person name="Cottet A."/>
            <person name="Casacuberta E."/>
            <person name="Monfort A."/>
            <person name="Argiriou A."/>
            <person name="Flores M."/>
            <person name="Liguori R."/>
            <person name="Vitale D."/>
            <person name="Mannhaupt G."/>
            <person name="Haase D."/>
            <person name="Schoof H."/>
            <person name="Rudd S."/>
            <person name="Zaccaria P."/>
            <person name="Mewes H.-W."/>
            <person name="Mayer K.F.X."/>
            <person name="Kaul S."/>
            <person name="Town C.D."/>
            <person name="Koo H.L."/>
            <person name="Tallon L.J."/>
            <person name="Jenkins J."/>
            <person name="Rooney T."/>
            <person name="Rizzo M."/>
            <person name="Walts A."/>
            <person name="Utterback T."/>
            <person name="Fujii C.Y."/>
            <person name="Shea T.P."/>
            <person name="Creasy T.H."/>
            <person name="Haas B."/>
            <person name="Maiti R."/>
            <person name="Wu D."/>
            <person name="Peterson J."/>
            <person name="Van Aken S."/>
            <person name="Pai G."/>
            <person name="Militscher J."/>
            <person name="Sellers P."/>
            <person name="Gill J.E."/>
            <person name="Feldblyum T.V."/>
            <person name="Preuss D."/>
            <person name="Lin X."/>
            <person name="Nierman W.C."/>
            <person name="Salzberg S.L."/>
            <person name="White O."/>
            <person name="Venter J.C."/>
            <person name="Fraser C.M."/>
            <person name="Kaneko T."/>
            <person name="Nakamura Y."/>
            <person name="Sato S."/>
            <person name="Kato T."/>
            <person name="Asamizu E."/>
            <person name="Sasamoto S."/>
            <person name="Kimura T."/>
            <person name="Idesawa K."/>
            <person name="Kawashima K."/>
            <person name="Kishida Y."/>
            <person name="Kiyokawa C."/>
            <person name="Kohara M."/>
            <person name="Matsumoto M."/>
            <person name="Matsuno A."/>
            <person name="Muraki A."/>
            <person name="Nakayama S."/>
            <person name="Nakazaki N."/>
            <person name="Shinpo S."/>
            <person name="Takeuchi C."/>
            <person name="Wada T."/>
            <person name="Watanabe A."/>
            <person name="Yamada M."/>
            <person name="Yasuda M."/>
            <person name="Tabata S."/>
        </authorList>
    </citation>
    <scope>NUCLEOTIDE SEQUENCE [LARGE SCALE GENOMIC DNA]</scope>
    <source>
        <strain>cv. Columbia</strain>
    </source>
</reference>
<reference key="4">
    <citation type="journal article" date="2017" name="Plant J.">
        <title>Araport11: a complete reannotation of the Arabidopsis thaliana reference genome.</title>
        <authorList>
            <person name="Cheng C.Y."/>
            <person name="Krishnakumar V."/>
            <person name="Chan A.P."/>
            <person name="Thibaud-Nissen F."/>
            <person name="Schobel S."/>
            <person name="Town C.D."/>
        </authorList>
    </citation>
    <scope>GENOME REANNOTATION</scope>
    <source>
        <strain>cv. Columbia</strain>
    </source>
</reference>
<reference key="5">
    <citation type="journal article" date="2003" name="Science">
        <title>Empirical analysis of transcriptional activity in the Arabidopsis genome.</title>
        <authorList>
            <person name="Yamada K."/>
            <person name="Lim J."/>
            <person name="Dale J.M."/>
            <person name="Chen H."/>
            <person name="Shinn P."/>
            <person name="Palm C.J."/>
            <person name="Southwick A.M."/>
            <person name="Wu H.C."/>
            <person name="Kim C.J."/>
            <person name="Nguyen M."/>
            <person name="Pham P.K."/>
            <person name="Cheuk R.F."/>
            <person name="Karlin-Newmann G."/>
            <person name="Liu S.X."/>
            <person name="Lam B."/>
            <person name="Sakano H."/>
            <person name="Wu T."/>
            <person name="Yu G."/>
            <person name="Miranda M."/>
            <person name="Quach H.L."/>
            <person name="Tripp M."/>
            <person name="Chang C.H."/>
            <person name="Lee J.M."/>
            <person name="Toriumi M.J."/>
            <person name="Chan M.M."/>
            <person name="Tang C.C."/>
            <person name="Onodera C.S."/>
            <person name="Deng J.M."/>
            <person name="Akiyama K."/>
            <person name="Ansari Y."/>
            <person name="Arakawa T."/>
            <person name="Banh J."/>
            <person name="Banno F."/>
            <person name="Bowser L."/>
            <person name="Brooks S.Y."/>
            <person name="Carninci P."/>
            <person name="Chao Q."/>
            <person name="Choy N."/>
            <person name="Enju A."/>
            <person name="Goldsmith A.D."/>
            <person name="Gurjal M."/>
            <person name="Hansen N.F."/>
            <person name="Hayashizaki Y."/>
            <person name="Johnson-Hopson C."/>
            <person name="Hsuan V.W."/>
            <person name="Iida K."/>
            <person name="Karnes M."/>
            <person name="Khan S."/>
            <person name="Koesema E."/>
            <person name="Ishida J."/>
            <person name="Jiang P.X."/>
            <person name="Jones T."/>
            <person name="Kawai J."/>
            <person name="Kamiya A."/>
            <person name="Meyers C."/>
            <person name="Nakajima M."/>
            <person name="Narusaka M."/>
            <person name="Seki M."/>
            <person name="Sakurai T."/>
            <person name="Satou M."/>
            <person name="Tamse R."/>
            <person name="Vaysberg M."/>
            <person name="Wallender E.K."/>
            <person name="Wong C."/>
            <person name="Yamamura Y."/>
            <person name="Yuan S."/>
            <person name="Shinozaki K."/>
            <person name="Davis R.W."/>
            <person name="Theologis A."/>
            <person name="Ecker J.R."/>
        </authorList>
    </citation>
    <scope>NUCLEOTIDE SEQUENCE [LARGE SCALE MRNA]</scope>
    <source>
        <strain>cv. Columbia</strain>
    </source>
</reference>
<reference key="6">
    <citation type="journal article" date="2004" name="Plant Physiol.">
        <title>Immunophilins and parvulins. Superfamily of peptidyl prolyl isomerases in Arabidopsis.</title>
        <authorList>
            <person name="He Z."/>
            <person name="Li L."/>
            <person name="Luan S."/>
        </authorList>
    </citation>
    <scope>TISSUE SPECIFICITY</scope>
    <scope>GENE FAMILY</scope>
    <scope>NOMENCLATURE</scope>
</reference>
<reference key="7">
    <citation type="journal article" date="2004" name="Plant Physiol.">
        <title>The Arabidopsis cyclophilin gene family.</title>
        <authorList>
            <person name="Romano P.G.N."/>
            <person name="Horton P."/>
            <person name="Gray J.E."/>
        </authorList>
    </citation>
    <scope>GENE FAMILY</scope>
    <scope>NOMENCLATURE</scope>
</reference>
<protein>
    <recommendedName>
        <fullName>Peptidyl-prolyl cis-trans isomerase CYP19-3</fullName>
        <shortName>PPIase CYP19-3</shortName>
        <ecNumber>5.2.1.8</ecNumber>
    </recommendedName>
    <alternativeName>
        <fullName>Cyclophilin of 19 kDa 3</fullName>
    </alternativeName>
    <alternativeName>
        <fullName>Cyclophilin-4</fullName>
    </alternativeName>
    <alternativeName>
        <fullName>Rotamase cyclophilin-2</fullName>
    </alternativeName>
</protein>
<dbReference type="EC" id="5.2.1.8"/>
<dbReference type="EMBL" id="U40400">
    <property type="protein sequence ID" value="AAB96833.1"/>
    <property type="molecule type" value="Genomic_DNA"/>
</dbReference>
<dbReference type="EMBL" id="U31370">
    <property type="protein sequence ID" value="AAA74096.1"/>
    <property type="molecule type" value="Genomic_DNA"/>
</dbReference>
<dbReference type="EMBL" id="AL163763">
    <property type="protein sequence ID" value="CAB87406.1"/>
    <property type="molecule type" value="Genomic_DNA"/>
</dbReference>
<dbReference type="EMBL" id="CP002686">
    <property type="protein sequence ID" value="AEE79473.1"/>
    <property type="molecule type" value="Genomic_DNA"/>
</dbReference>
<dbReference type="EMBL" id="CP002686">
    <property type="protein sequence ID" value="AEE79474.1"/>
    <property type="molecule type" value="Genomic_DNA"/>
</dbReference>
<dbReference type="EMBL" id="AY072128">
    <property type="protein sequence ID" value="AAL59950.1"/>
    <property type="molecule type" value="mRNA"/>
</dbReference>
<dbReference type="EMBL" id="AY096697">
    <property type="protein sequence ID" value="AAM20331.1"/>
    <property type="molecule type" value="mRNA"/>
</dbReference>
<dbReference type="PIR" id="T47724">
    <property type="entry name" value="T47724"/>
</dbReference>
<dbReference type="PIR" id="T50767">
    <property type="entry name" value="T50767"/>
</dbReference>
<dbReference type="RefSeq" id="NP_001319764.1">
    <property type="nucleotide sequence ID" value="NM_001339763.1"/>
</dbReference>
<dbReference type="RefSeq" id="NP_191166.1">
    <property type="nucleotide sequence ID" value="NM_115465.5"/>
</dbReference>
<dbReference type="SMR" id="Q38867"/>
<dbReference type="BioGRID" id="10089">
    <property type="interactions" value="6"/>
</dbReference>
<dbReference type="FunCoup" id="Q38867">
    <property type="interactions" value="1784"/>
</dbReference>
<dbReference type="IntAct" id="Q38867">
    <property type="interactions" value="4"/>
</dbReference>
<dbReference type="STRING" id="3702.Q38867"/>
<dbReference type="iPTMnet" id="Q38867"/>
<dbReference type="MetOSite" id="Q38867"/>
<dbReference type="SwissPalm" id="Q38867"/>
<dbReference type="PaxDb" id="3702-AT3G56070.1"/>
<dbReference type="ProteomicsDB" id="240666"/>
<dbReference type="EnsemblPlants" id="AT3G56070.1">
    <property type="protein sequence ID" value="AT3G56070.1"/>
    <property type="gene ID" value="AT3G56070"/>
</dbReference>
<dbReference type="EnsemblPlants" id="AT3G56070.2">
    <property type="protein sequence ID" value="AT3G56070.2"/>
    <property type="gene ID" value="AT3G56070"/>
</dbReference>
<dbReference type="GeneID" id="824773"/>
<dbReference type="Gramene" id="AT3G56070.1">
    <property type="protein sequence ID" value="AT3G56070.1"/>
    <property type="gene ID" value="AT3G56070"/>
</dbReference>
<dbReference type="Gramene" id="AT3G56070.2">
    <property type="protein sequence ID" value="AT3G56070.2"/>
    <property type="gene ID" value="AT3G56070"/>
</dbReference>
<dbReference type="KEGG" id="ath:AT3G56070"/>
<dbReference type="Araport" id="AT3G56070"/>
<dbReference type="TAIR" id="AT3G56070">
    <property type="gene designation" value="ROC2"/>
</dbReference>
<dbReference type="eggNOG" id="KOG0865">
    <property type="taxonomic scope" value="Eukaryota"/>
</dbReference>
<dbReference type="HOGENOM" id="CLU_012062_4_2_1"/>
<dbReference type="InParanoid" id="Q38867"/>
<dbReference type="OMA" id="FKSIVPR"/>
<dbReference type="OrthoDB" id="193499at2759"/>
<dbReference type="PhylomeDB" id="Q38867"/>
<dbReference type="BRENDA" id="5.2.1.8">
    <property type="organism ID" value="399"/>
</dbReference>
<dbReference type="CD-CODE" id="4299E36E">
    <property type="entry name" value="Nucleolus"/>
</dbReference>
<dbReference type="PRO" id="PR:Q38867"/>
<dbReference type="Proteomes" id="UP000006548">
    <property type="component" value="Chromosome 3"/>
</dbReference>
<dbReference type="ExpressionAtlas" id="Q38867">
    <property type="expression patterns" value="baseline and differential"/>
</dbReference>
<dbReference type="GO" id="GO:0005829">
    <property type="term" value="C:cytosol"/>
    <property type="evidence" value="ECO:0007005"/>
    <property type="project" value="TAIR"/>
</dbReference>
<dbReference type="GO" id="GO:0005794">
    <property type="term" value="C:Golgi apparatus"/>
    <property type="evidence" value="ECO:0007005"/>
    <property type="project" value="TAIR"/>
</dbReference>
<dbReference type="GO" id="GO:0005739">
    <property type="term" value="C:mitochondrion"/>
    <property type="evidence" value="ECO:0007005"/>
    <property type="project" value="TAIR"/>
</dbReference>
<dbReference type="GO" id="GO:0016018">
    <property type="term" value="F:cyclosporin A binding"/>
    <property type="evidence" value="ECO:0000250"/>
    <property type="project" value="TAIR"/>
</dbReference>
<dbReference type="GO" id="GO:0003755">
    <property type="term" value="F:peptidyl-prolyl cis-trans isomerase activity"/>
    <property type="evidence" value="ECO:0000250"/>
    <property type="project" value="TAIR"/>
</dbReference>
<dbReference type="GO" id="GO:0006457">
    <property type="term" value="P:protein folding"/>
    <property type="evidence" value="ECO:0007669"/>
    <property type="project" value="InterPro"/>
</dbReference>
<dbReference type="GO" id="GO:0007165">
    <property type="term" value="P:signal transduction"/>
    <property type="evidence" value="ECO:0000250"/>
    <property type="project" value="TAIR"/>
</dbReference>
<dbReference type="CDD" id="cd01926">
    <property type="entry name" value="cyclophilin_ABH_like"/>
    <property type="match status" value="1"/>
</dbReference>
<dbReference type="FunFam" id="2.40.100.10:FF:000002">
    <property type="entry name" value="Peptidyl-prolyl cis-trans isomerase"/>
    <property type="match status" value="1"/>
</dbReference>
<dbReference type="Gene3D" id="2.40.100.10">
    <property type="entry name" value="Cyclophilin-like"/>
    <property type="match status" value="1"/>
</dbReference>
<dbReference type="InterPro" id="IPR029000">
    <property type="entry name" value="Cyclophilin-like_dom_sf"/>
</dbReference>
<dbReference type="InterPro" id="IPR024936">
    <property type="entry name" value="Cyclophilin-type_PPIase"/>
</dbReference>
<dbReference type="InterPro" id="IPR020892">
    <property type="entry name" value="Cyclophilin-type_PPIase_CS"/>
</dbReference>
<dbReference type="InterPro" id="IPR002130">
    <property type="entry name" value="Cyclophilin-type_PPIase_dom"/>
</dbReference>
<dbReference type="PANTHER" id="PTHR11071">
    <property type="entry name" value="PEPTIDYL-PROLYL CIS-TRANS ISOMERASE"/>
    <property type="match status" value="1"/>
</dbReference>
<dbReference type="PANTHER" id="PTHR11071:SF561">
    <property type="entry name" value="PEPTIDYL-PROLYL CIS-TRANS ISOMERASE D-RELATED"/>
    <property type="match status" value="1"/>
</dbReference>
<dbReference type="Pfam" id="PF00160">
    <property type="entry name" value="Pro_isomerase"/>
    <property type="match status" value="1"/>
</dbReference>
<dbReference type="PIRSF" id="PIRSF001467">
    <property type="entry name" value="Peptidylpro_ismrse"/>
    <property type="match status" value="1"/>
</dbReference>
<dbReference type="PRINTS" id="PR00153">
    <property type="entry name" value="CSAPPISMRASE"/>
</dbReference>
<dbReference type="SUPFAM" id="SSF50891">
    <property type="entry name" value="Cyclophilin-like"/>
    <property type="match status" value="1"/>
</dbReference>
<dbReference type="PROSITE" id="PS00170">
    <property type="entry name" value="CSA_PPIASE_1"/>
    <property type="match status" value="1"/>
</dbReference>
<dbReference type="PROSITE" id="PS50072">
    <property type="entry name" value="CSA_PPIASE_2"/>
    <property type="match status" value="1"/>
</dbReference>
<keyword id="KW-0143">Chaperone</keyword>
<keyword id="KW-0963">Cytoplasm</keyword>
<keyword id="KW-0413">Isomerase</keyword>
<keyword id="KW-1185">Reference proteome</keyword>
<keyword id="KW-0697">Rotamase</keyword>
<accession>Q38867</accession>
<accession>Q38901</accession>
<accession>Q9LYN4</accession>
<evidence type="ECO:0000250" key="1"/>
<evidence type="ECO:0000255" key="2">
    <source>
        <dbReference type="PROSITE-ProRule" id="PRU00156"/>
    </source>
</evidence>
<evidence type="ECO:0000269" key="3">
    <source>
    </source>
</evidence>
<evidence type="ECO:0000269" key="4">
    <source>
    </source>
</evidence>
<evidence type="ECO:0000305" key="5"/>
<organism>
    <name type="scientific">Arabidopsis thaliana</name>
    <name type="common">Mouse-ear cress</name>
    <dbReference type="NCBI Taxonomy" id="3702"/>
    <lineage>
        <taxon>Eukaryota</taxon>
        <taxon>Viridiplantae</taxon>
        <taxon>Streptophyta</taxon>
        <taxon>Embryophyta</taxon>
        <taxon>Tracheophyta</taxon>
        <taxon>Spermatophyta</taxon>
        <taxon>Magnoliopsida</taxon>
        <taxon>eudicotyledons</taxon>
        <taxon>Gunneridae</taxon>
        <taxon>Pentapetalae</taxon>
        <taxon>rosids</taxon>
        <taxon>malvids</taxon>
        <taxon>Brassicales</taxon>
        <taxon>Brassicaceae</taxon>
        <taxon>Camelineae</taxon>
        <taxon>Arabidopsis</taxon>
    </lineage>
</organism>
<feature type="chain" id="PRO_0000064137" description="Peptidyl-prolyl cis-trans isomerase CYP19-3">
    <location>
        <begin position="1"/>
        <end position="176"/>
    </location>
</feature>
<feature type="domain" description="PPIase cyclophilin-type" evidence="2">
    <location>
        <begin position="7"/>
        <end position="170"/>
    </location>
</feature>
<feature type="sequence conflict" description="In Ref. 2; AAA74096." evidence="5" ref="2">
    <original>D</original>
    <variation>Y</variation>
    <location>
        <position position="155"/>
    </location>
</feature>
<feature type="sequence conflict" description="In Ref. 1; AAB96833." evidence="5" ref="1">
    <original>K</original>
    <variation>N</variation>
    <location>
        <position position="172"/>
    </location>
</feature>